<protein>
    <recommendedName>
        <fullName evidence="1">Glutathione-dependent formaldehyde-activating enzyme</fullName>
        <ecNumber evidence="1">4.4.1.22</ecNumber>
    </recommendedName>
    <alternativeName>
        <fullName evidence="1">S-(hydroxymethyl)glutathione synthase</fullName>
    </alternativeName>
</protein>
<proteinExistence type="inferred from homology"/>
<organism>
    <name type="scientific">Xanthomonas campestris pv. campestris (strain B100)</name>
    <dbReference type="NCBI Taxonomy" id="509169"/>
    <lineage>
        <taxon>Bacteria</taxon>
        <taxon>Pseudomonadati</taxon>
        <taxon>Pseudomonadota</taxon>
        <taxon>Gammaproteobacteria</taxon>
        <taxon>Lysobacterales</taxon>
        <taxon>Lysobacteraceae</taxon>
        <taxon>Xanthomonas</taxon>
    </lineage>
</organism>
<sequence length="191" mass="20207">MANVSIHPAVDGGVVHGSTEGFAGGTLQCLCASDKVTVDVASQSAHNHACGCSKCWKPEGAKFSVVAVAPRDKVTVTAHPEKLKIVDESATIQRHACTGCGVHLYGRIENKDHAFYGLDFIHTELSQQSGWSPPGFAAFVSSIIETGTPPDQMDGVRARLTELGLTPYDCLSPALMDALSTNVARHKGLLH</sequence>
<dbReference type="EC" id="4.4.1.22" evidence="1"/>
<dbReference type="EMBL" id="AM920689">
    <property type="protein sequence ID" value="CAP50152.1"/>
    <property type="molecule type" value="Genomic_DNA"/>
</dbReference>
<dbReference type="SMR" id="B0RNW7"/>
<dbReference type="KEGG" id="xca:xcc-b100_0811"/>
<dbReference type="HOGENOM" id="CLU_090716_0_0_6"/>
<dbReference type="UniPathway" id="UPA00562">
    <property type="reaction ID" value="UER00621"/>
</dbReference>
<dbReference type="Proteomes" id="UP000001188">
    <property type="component" value="Chromosome"/>
</dbReference>
<dbReference type="GO" id="GO:0051907">
    <property type="term" value="F:S-(hydroxymethyl)glutathione synthase activity"/>
    <property type="evidence" value="ECO:0007669"/>
    <property type="project" value="UniProtKB-UniRule"/>
</dbReference>
<dbReference type="GO" id="GO:0008270">
    <property type="term" value="F:zinc ion binding"/>
    <property type="evidence" value="ECO:0007669"/>
    <property type="project" value="UniProtKB-UniRule"/>
</dbReference>
<dbReference type="GO" id="GO:0046294">
    <property type="term" value="P:formaldehyde catabolic process"/>
    <property type="evidence" value="ECO:0007669"/>
    <property type="project" value="UniProtKB-UniRule"/>
</dbReference>
<dbReference type="Gene3D" id="3.90.1590.10">
    <property type="entry name" value="glutathione-dependent formaldehyde- activating enzyme (gfa)"/>
    <property type="match status" value="1"/>
</dbReference>
<dbReference type="HAMAP" id="MF_00723">
    <property type="entry name" value="Formald_GSH"/>
    <property type="match status" value="1"/>
</dbReference>
<dbReference type="InterPro" id="IPR006913">
    <property type="entry name" value="CENP-V/GFA"/>
</dbReference>
<dbReference type="InterPro" id="IPR014185">
    <property type="entry name" value="Formald_GSH"/>
</dbReference>
<dbReference type="InterPro" id="IPR011057">
    <property type="entry name" value="Mss4-like_sf"/>
</dbReference>
<dbReference type="NCBIfam" id="TIGR02820">
    <property type="entry name" value="formald_GSH"/>
    <property type="match status" value="1"/>
</dbReference>
<dbReference type="NCBIfam" id="NF003829">
    <property type="entry name" value="PRK05417.1"/>
    <property type="match status" value="1"/>
</dbReference>
<dbReference type="PANTHER" id="PTHR33337:SF40">
    <property type="entry name" value="CENP-V_GFA DOMAIN-CONTAINING PROTEIN-RELATED"/>
    <property type="match status" value="1"/>
</dbReference>
<dbReference type="PANTHER" id="PTHR33337">
    <property type="entry name" value="GFA DOMAIN-CONTAINING PROTEIN"/>
    <property type="match status" value="1"/>
</dbReference>
<dbReference type="Pfam" id="PF04828">
    <property type="entry name" value="GFA"/>
    <property type="match status" value="1"/>
</dbReference>
<dbReference type="PIRSF" id="PIRSF033318">
    <property type="entry name" value="Formald_GSH"/>
    <property type="match status" value="1"/>
</dbReference>
<dbReference type="SUPFAM" id="SSF51316">
    <property type="entry name" value="Mss4-like"/>
    <property type="match status" value="1"/>
</dbReference>
<dbReference type="PROSITE" id="PS51891">
    <property type="entry name" value="CENP_V_GFA"/>
    <property type="match status" value="1"/>
</dbReference>
<reference key="1">
    <citation type="journal article" date="2008" name="J. Biotechnol.">
        <title>The genome of Xanthomonas campestris pv. campestris B100 and its use for the reconstruction of metabolic pathways involved in xanthan biosynthesis.</title>
        <authorList>
            <person name="Vorhoelter F.-J."/>
            <person name="Schneiker S."/>
            <person name="Goesmann A."/>
            <person name="Krause L."/>
            <person name="Bekel T."/>
            <person name="Kaiser O."/>
            <person name="Linke B."/>
            <person name="Patschkowski T."/>
            <person name="Rueckert C."/>
            <person name="Schmid J."/>
            <person name="Sidhu V.K."/>
            <person name="Sieber V."/>
            <person name="Tauch A."/>
            <person name="Watt S.A."/>
            <person name="Weisshaar B."/>
            <person name="Becker A."/>
            <person name="Niehaus K."/>
            <person name="Puehler A."/>
        </authorList>
    </citation>
    <scope>NUCLEOTIDE SEQUENCE [LARGE SCALE GENOMIC DNA]</scope>
    <source>
        <strain>B100</strain>
    </source>
</reference>
<accession>B0RNW7</accession>
<evidence type="ECO:0000255" key="1">
    <source>
        <dbReference type="HAMAP-Rule" id="MF_00723"/>
    </source>
</evidence>
<evidence type="ECO:0000255" key="2">
    <source>
        <dbReference type="PROSITE-ProRule" id="PRU01239"/>
    </source>
</evidence>
<gene>
    <name evidence="1" type="primary">gfa</name>
    <name type="ordered locus">xcc-b100_0811</name>
</gene>
<comment type="function">
    <text evidence="1">Catalyzes the condensation of formaldehyde and glutathione to S-hydroxymethylglutathione.</text>
</comment>
<comment type="catalytic activity">
    <reaction evidence="1">
        <text>S-(hydroxymethyl)glutathione = glutathione + formaldehyde</text>
        <dbReference type="Rhea" id="RHEA:22488"/>
        <dbReference type="ChEBI" id="CHEBI:16842"/>
        <dbReference type="ChEBI" id="CHEBI:57925"/>
        <dbReference type="ChEBI" id="CHEBI:58758"/>
        <dbReference type="EC" id="4.4.1.22"/>
    </reaction>
</comment>
<comment type="cofactor">
    <cofactor evidence="1 2">
        <name>Zn(2+)</name>
        <dbReference type="ChEBI" id="CHEBI:29105"/>
    </cofactor>
    <text evidence="1 2">Binds 2 Zn(2+) ions per subunit.</text>
</comment>
<comment type="pathway">
    <text evidence="1">One-carbon metabolism; formaldehyde degradation; formate from formaldehyde (glutathione route): step 1/3.</text>
</comment>
<comment type="similarity">
    <text evidence="1">Belongs to the Gfa family.</text>
</comment>
<name>GFA_XANCB</name>
<keyword id="KW-0456">Lyase</keyword>
<keyword id="KW-0479">Metal-binding</keyword>
<keyword id="KW-0862">Zinc</keyword>
<feature type="chain" id="PRO_1000132647" description="Glutathione-dependent formaldehyde-activating enzyme">
    <location>
        <begin position="1"/>
        <end position="191"/>
    </location>
</feature>
<feature type="domain" description="CENP-V/GFA" evidence="2">
    <location>
        <begin position="22"/>
        <end position="169"/>
    </location>
</feature>
<feature type="binding site" evidence="1 2">
    <location>
        <position position="29"/>
    </location>
    <ligand>
        <name>Zn(2+)</name>
        <dbReference type="ChEBI" id="CHEBI:29105"/>
        <label>1</label>
        <note>structural</note>
    </ligand>
</feature>
<feature type="binding site" evidence="1 2">
    <location>
        <position position="31"/>
    </location>
    <ligand>
        <name>Zn(2+)</name>
        <dbReference type="ChEBI" id="CHEBI:29105"/>
        <label>1</label>
        <note>structural</note>
    </ligand>
</feature>
<feature type="binding site" evidence="1 2">
    <location>
        <position position="50"/>
    </location>
    <ligand>
        <name>Zn(2+)</name>
        <dbReference type="ChEBI" id="CHEBI:29105"/>
        <label>2</label>
        <note>catalytic</note>
    </ligand>
</feature>
<feature type="binding site" evidence="1 2">
    <location>
        <position position="52"/>
    </location>
    <ligand>
        <name>Zn(2+)</name>
        <dbReference type="ChEBI" id="CHEBI:29105"/>
        <label>2</label>
        <note>catalytic</note>
    </ligand>
</feature>
<feature type="binding site" evidence="1 2">
    <location>
        <position position="55"/>
    </location>
    <ligand>
        <name>Zn(2+)</name>
        <dbReference type="ChEBI" id="CHEBI:29105"/>
        <label>2</label>
        <note>catalytic</note>
    </ligand>
</feature>
<feature type="binding site" evidence="1 2">
    <location>
        <position position="97"/>
    </location>
    <ligand>
        <name>Zn(2+)</name>
        <dbReference type="ChEBI" id="CHEBI:29105"/>
        <label>1</label>
        <note>structural</note>
    </ligand>
</feature>
<feature type="binding site" evidence="1 2">
    <location>
        <position position="100"/>
    </location>
    <ligand>
        <name>Zn(2+)</name>
        <dbReference type="ChEBI" id="CHEBI:29105"/>
        <label>1</label>
        <note>structural</note>
    </ligand>
</feature>